<comment type="function">
    <text evidence="1">Catalyzes the irreversible NADPH-dependent deamination of GMP to IMP. It functions in the conversion of nucleobase, nucleoside and nucleotide derivatives of G to A nucleotides, and in maintaining the intracellular balance of A and G nucleotides.</text>
</comment>
<comment type="catalytic activity">
    <reaction evidence="1">
        <text>IMP + NH4(+) + NADP(+) = GMP + NADPH + 2 H(+)</text>
        <dbReference type="Rhea" id="RHEA:17185"/>
        <dbReference type="ChEBI" id="CHEBI:15378"/>
        <dbReference type="ChEBI" id="CHEBI:28938"/>
        <dbReference type="ChEBI" id="CHEBI:57783"/>
        <dbReference type="ChEBI" id="CHEBI:58053"/>
        <dbReference type="ChEBI" id="CHEBI:58115"/>
        <dbReference type="ChEBI" id="CHEBI:58349"/>
        <dbReference type="EC" id="1.7.1.7"/>
    </reaction>
</comment>
<comment type="similarity">
    <text evidence="1">Belongs to the IMPDH/GMPR family. GuaC type 2 subfamily.</text>
</comment>
<organism>
    <name type="scientific">Streptococcus pneumoniae (strain 70585)</name>
    <dbReference type="NCBI Taxonomy" id="488221"/>
    <lineage>
        <taxon>Bacteria</taxon>
        <taxon>Bacillati</taxon>
        <taxon>Bacillota</taxon>
        <taxon>Bacilli</taxon>
        <taxon>Lactobacillales</taxon>
        <taxon>Streptococcaceae</taxon>
        <taxon>Streptococcus</taxon>
    </lineage>
</organism>
<reference key="1">
    <citation type="journal article" date="2010" name="Genome Biol.">
        <title>Structure and dynamics of the pan-genome of Streptococcus pneumoniae and closely related species.</title>
        <authorList>
            <person name="Donati C."/>
            <person name="Hiller N.L."/>
            <person name="Tettelin H."/>
            <person name="Muzzi A."/>
            <person name="Croucher N.J."/>
            <person name="Angiuoli S.V."/>
            <person name="Oggioni M."/>
            <person name="Dunning Hotopp J.C."/>
            <person name="Hu F.Z."/>
            <person name="Riley D.R."/>
            <person name="Covacci A."/>
            <person name="Mitchell T.J."/>
            <person name="Bentley S.D."/>
            <person name="Kilian M."/>
            <person name="Ehrlich G.D."/>
            <person name="Rappuoli R."/>
            <person name="Moxon E.R."/>
            <person name="Masignani V."/>
        </authorList>
    </citation>
    <scope>NUCLEOTIDE SEQUENCE [LARGE SCALE GENOMIC DNA]</scope>
    <source>
        <strain>70585</strain>
    </source>
</reference>
<dbReference type="EC" id="1.7.1.7" evidence="1"/>
<dbReference type="EMBL" id="CP000918">
    <property type="protein sequence ID" value="ACO16255.1"/>
    <property type="molecule type" value="Genomic_DNA"/>
</dbReference>
<dbReference type="RefSeq" id="WP_000931162.1">
    <property type="nucleotide sequence ID" value="NC_012468.1"/>
</dbReference>
<dbReference type="SMR" id="C1C7M7"/>
<dbReference type="KEGG" id="snm:SP70585_1312"/>
<dbReference type="HOGENOM" id="CLU_022552_5_0_9"/>
<dbReference type="Proteomes" id="UP000002211">
    <property type="component" value="Chromosome"/>
</dbReference>
<dbReference type="GO" id="GO:0005829">
    <property type="term" value="C:cytosol"/>
    <property type="evidence" value="ECO:0007669"/>
    <property type="project" value="TreeGrafter"/>
</dbReference>
<dbReference type="GO" id="GO:1902560">
    <property type="term" value="C:GMP reductase complex"/>
    <property type="evidence" value="ECO:0007669"/>
    <property type="project" value="InterPro"/>
</dbReference>
<dbReference type="GO" id="GO:0003920">
    <property type="term" value="F:GMP reductase activity"/>
    <property type="evidence" value="ECO:0007669"/>
    <property type="project" value="UniProtKB-UniRule"/>
</dbReference>
<dbReference type="GO" id="GO:0006163">
    <property type="term" value="P:purine nucleotide metabolic process"/>
    <property type="evidence" value="ECO:0007669"/>
    <property type="project" value="UniProtKB-UniRule"/>
</dbReference>
<dbReference type="CDD" id="cd00381">
    <property type="entry name" value="IMPDH"/>
    <property type="match status" value="1"/>
</dbReference>
<dbReference type="FunFam" id="3.20.20.70:FF:000079">
    <property type="entry name" value="GMP reductase"/>
    <property type="match status" value="1"/>
</dbReference>
<dbReference type="Gene3D" id="3.20.20.70">
    <property type="entry name" value="Aldolase class I"/>
    <property type="match status" value="1"/>
</dbReference>
<dbReference type="HAMAP" id="MF_01511">
    <property type="entry name" value="GMP_reduct_type2"/>
    <property type="match status" value="1"/>
</dbReference>
<dbReference type="InterPro" id="IPR013785">
    <property type="entry name" value="Aldolase_TIM"/>
</dbReference>
<dbReference type="InterPro" id="IPR050139">
    <property type="entry name" value="GMP_reductase"/>
</dbReference>
<dbReference type="InterPro" id="IPR005994">
    <property type="entry name" value="GuaC_type_2"/>
</dbReference>
<dbReference type="InterPro" id="IPR015875">
    <property type="entry name" value="IMP_DH/GMP_Rdtase_CS"/>
</dbReference>
<dbReference type="InterPro" id="IPR001093">
    <property type="entry name" value="IMP_DH_GMPRt"/>
</dbReference>
<dbReference type="NCBIfam" id="TIGR01306">
    <property type="entry name" value="GMP_reduct_2"/>
    <property type="match status" value="1"/>
</dbReference>
<dbReference type="NCBIfam" id="NF003966">
    <property type="entry name" value="PRK05458.1"/>
    <property type="match status" value="1"/>
</dbReference>
<dbReference type="PANTHER" id="PTHR43170">
    <property type="entry name" value="GMP REDUCTASE"/>
    <property type="match status" value="1"/>
</dbReference>
<dbReference type="PANTHER" id="PTHR43170:SF5">
    <property type="entry name" value="GMP REDUCTASE"/>
    <property type="match status" value="1"/>
</dbReference>
<dbReference type="Pfam" id="PF00478">
    <property type="entry name" value="IMPDH"/>
    <property type="match status" value="1"/>
</dbReference>
<dbReference type="PIRSF" id="PIRSF036500">
    <property type="entry name" value="GMP_red_Firmic"/>
    <property type="match status" value="1"/>
</dbReference>
<dbReference type="SMART" id="SM01240">
    <property type="entry name" value="IMPDH"/>
    <property type="match status" value="1"/>
</dbReference>
<dbReference type="SUPFAM" id="SSF51412">
    <property type="entry name" value="Inosine monophosphate dehydrogenase (IMPDH)"/>
    <property type="match status" value="1"/>
</dbReference>
<dbReference type="PROSITE" id="PS00487">
    <property type="entry name" value="IMP_DH_GMP_RED"/>
    <property type="match status" value="1"/>
</dbReference>
<name>GUAC_STRP7</name>
<gene>
    <name evidence="1" type="primary">guaC</name>
    <name type="ordered locus">SP70585_1312</name>
</gene>
<protein>
    <recommendedName>
        <fullName evidence="1">GMP reductase</fullName>
        <ecNumber evidence="1">1.7.1.7</ecNumber>
    </recommendedName>
    <alternativeName>
        <fullName evidence="1">Guanosine 5'-monophosphate oxidoreductase</fullName>
        <shortName evidence="1">Guanosine monophosphate reductase</shortName>
    </alternativeName>
</protein>
<accession>C1C7M7</accession>
<feature type="chain" id="PRO_1000185056" description="GMP reductase">
    <location>
        <begin position="1"/>
        <end position="328"/>
    </location>
</feature>
<feature type="active site" description="Thioimidate intermediate" evidence="1">
    <location>
        <position position="176"/>
    </location>
</feature>
<feature type="binding site" evidence="1">
    <location>
        <begin position="205"/>
        <end position="228"/>
    </location>
    <ligand>
        <name>NADP(+)</name>
        <dbReference type="ChEBI" id="CHEBI:58349"/>
    </ligand>
</feature>
<evidence type="ECO:0000255" key="1">
    <source>
        <dbReference type="HAMAP-Rule" id="MF_01511"/>
    </source>
</evidence>
<sequence>MLNEFPIFDYEDIQLIPNKCVIKSRAEADTSVTLGNHTFKLPVVPANMQTILDENVAEQLAKGGYFYIMHRFDEAGRIPFIKRMHDQGLIASISVGVKDYEYDFVSQLKADAPEYITIDIAHGHADSVISMIQHIKKELPDTFVIAGNVGTPEAVRELENAGADATKVGIGPGKVCITKVKTGFGTGGWQLAALRWCAKAARKPIIADGGIRTHGDIAKSIRFGASMIMIGSLFAGHIESPGKTIEVDGEQFKEYYGSASQYQKGAYKNVEGKRILLPAKGHLQDTLTEMEQDLQSAISYAGGRQVADLKHVDYVIVKNSIWNGDASH</sequence>
<keyword id="KW-0521">NADP</keyword>
<keyword id="KW-0560">Oxidoreductase</keyword>
<proteinExistence type="inferred from homology"/>